<name>HIBCH_CHICK</name>
<evidence type="ECO:0000250" key="1"/>
<evidence type="ECO:0000255" key="2"/>
<evidence type="ECO:0000305" key="3"/>
<gene>
    <name type="primary">HIBCH</name>
    <name type="ORF">RCJMB04_20j11</name>
</gene>
<keyword id="KW-0101">Branched-chain amino acid catabolism</keyword>
<keyword id="KW-0378">Hydrolase</keyword>
<keyword id="KW-0496">Mitochondrion</keyword>
<keyword id="KW-1185">Reference proteome</keyword>
<keyword id="KW-0809">Transit peptide</keyword>
<comment type="function">
    <text evidence="1">Hydrolyzes 3-hydroxyisobutyryl-CoA (HIBYL-CoA), a saline catabolite. Has high activity toward isobutyryl-CoA. Could be an isobutyryl-CoA dehydrogenase that functions in valine catabolism. Also hydrolyzes 3-hydroxypropanoyl-CoA (By similarity).</text>
</comment>
<comment type="catalytic activity">
    <reaction>
        <text>3-hydroxy-2-methylpropanoyl-CoA + H2O = 3-hydroxy-2-methylpropanoate + CoA + H(+)</text>
        <dbReference type="Rhea" id="RHEA:20888"/>
        <dbReference type="ChEBI" id="CHEBI:11805"/>
        <dbReference type="ChEBI" id="CHEBI:15377"/>
        <dbReference type="ChEBI" id="CHEBI:15378"/>
        <dbReference type="ChEBI" id="CHEBI:57287"/>
        <dbReference type="ChEBI" id="CHEBI:57340"/>
        <dbReference type="EC" id="3.1.2.4"/>
    </reaction>
</comment>
<comment type="pathway">
    <text>Amino-acid degradation; L-valine degradation.</text>
</comment>
<comment type="subcellular location">
    <subcellularLocation>
        <location evidence="1">Mitochondrion</location>
    </subcellularLocation>
</comment>
<comment type="similarity">
    <text evidence="3">Belongs to the enoyl-CoA hydratase/isomerase family.</text>
</comment>
<dbReference type="EC" id="3.1.2.4"/>
<dbReference type="EMBL" id="AJ720574">
    <property type="protein sequence ID" value="CAG32233.1"/>
    <property type="molecule type" value="mRNA"/>
</dbReference>
<dbReference type="RefSeq" id="NP_001026414.1">
    <property type="nucleotide sequence ID" value="NM_001031243.2"/>
</dbReference>
<dbReference type="SMR" id="Q5ZJ60"/>
<dbReference type="FunCoup" id="Q5ZJ60">
    <property type="interactions" value="2420"/>
</dbReference>
<dbReference type="STRING" id="9031.ENSGALP00000052042"/>
<dbReference type="PaxDb" id="9031-ENSGALP00000003623"/>
<dbReference type="GeneID" id="423979"/>
<dbReference type="KEGG" id="gga:423979"/>
<dbReference type="CTD" id="26275"/>
<dbReference type="VEuPathDB" id="HostDB:geneid_423979"/>
<dbReference type="eggNOG" id="KOG1684">
    <property type="taxonomic scope" value="Eukaryota"/>
</dbReference>
<dbReference type="InParanoid" id="Q5ZJ60"/>
<dbReference type="OMA" id="EVFTMEY"/>
<dbReference type="OrthoDB" id="1737613at2759"/>
<dbReference type="PhylomeDB" id="Q5ZJ60"/>
<dbReference type="UniPathway" id="UPA00362"/>
<dbReference type="PRO" id="PR:Q5ZJ60"/>
<dbReference type="Proteomes" id="UP000000539">
    <property type="component" value="Unassembled WGS sequence"/>
</dbReference>
<dbReference type="GO" id="GO:0005739">
    <property type="term" value="C:mitochondrion"/>
    <property type="evidence" value="ECO:0000318"/>
    <property type="project" value="GO_Central"/>
</dbReference>
<dbReference type="GO" id="GO:0003860">
    <property type="term" value="F:3-hydroxyisobutyryl-CoA hydrolase activity"/>
    <property type="evidence" value="ECO:0000318"/>
    <property type="project" value="GO_Central"/>
</dbReference>
<dbReference type="GO" id="GO:0006574">
    <property type="term" value="P:valine catabolic process"/>
    <property type="evidence" value="ECO:0000318"/>
    <property type="project" value="GO_Central"/>
</dbReference>
<dbReference type="CDD" id="cd06558">
    <property type="entry name" value="crotonase-like"/>
    <property type="match status" value="1"/>
</dbReference>
<dbReference type="FunFam" id="3.90.226.10:FF:000026">
    <property type="entry name" value="3-hydroxyisobutyryl-CoA hydrolase, mitochondrial"/>
    <property type="match status" value="1"/>
</dbReference>
<dbReference type="Gene3D" id="3.90.226.10">
    <property type="entry name" value="2-enoyl-CoA Hydratase, Chain A, domain 1"/>
    <property type="match status" value="1"/>
</dbReference>
<dbReference type="InterPro" id="IPR029045">
    <property type="entry name" value="ClpP/crotonase-like_dom_sf"/>
</dbReference>
<dbReference type="InterPro" id="IPR045004">
    <property type="entry name" value="ECH_dom"/>
</dbReference>
<dbReference type="InterPro" id="IPR032259">
    <property type="entry name" value="HIBYL-CoA-H"/>
</dbReference>
<dbReference type="NCBIfam" id="NF004127">
    <property type="entry name" value="PRK05617.1"/>
    <property type="match status" value="1"/>
</dbReference>
<dbReference type="PANTHER" id="PTHR43176:SF3">
    <property type="entry name" value="3-HYDROXYISOBUTYRYL-COA HYDROLASE, MITOCHONDRIAL"/>
    <property type="match status" value="1"/>
</dbReference>
<dbReference type="PANTHER" id="PTHR43176">
    <property type="entry name" value="3-HYDROXYISOBUTYRYL-COA HYDROLASE-RELATED"/>
    <property type="match status" value="1"/>
</dbReference>
<dbReference type="Pfam" id="PF16113">
    <property type="entry name" value="ECH_2"/>
    <property type="match status" value="1"/>
</dbReference>
<dbReference type="SUPFAM" id="SSF52096">
    <property type="entry name" value="ClpP/crotonase"/>
    <property type="match status" value="1"/>
</dbReference>
<protein>
    <recommendedName>
        <fullName>3-hydroxyisobutyryl-CoA hydrolase, mitochondrial</fullName>
        <ecNumber>3.1.2.4</ecNumber>
    </recommendedName>
    <alternativeName>
        <fullName>3-hydroxyisobutyryl-coenzyme A hydrolase</fullName>
        <shortName>HIB-CoA hydrolase</shortName>
        <shortName>HIBYL-CoA-H</shortName>
    </alternativeName>
</protein>
<proteinExistence type="evidence at transcript level"/>
<accession>Q5ZJ60</accession>
<sequence length="385" mass="42829">MAARVLMAPRRLKPFNRLQVILQHLKTCKHTDSAADVLLQKQGGAGIITLNRPKVLNALSFKMIQQIYPQIKAWEQDPETFLIIIKGTGEKAFCAGGDVRAIADAGKAGDTMTRDYFREEYRLDNAIGTCKKPYVALIDGITMGGGVGLSVHGHFRVATEKTVFAMPETAIGLFPDVGGGYFLPRLSGKIGHLLALTGFRLKGRDVLKAGIATHFVESGKLPELEKDLIALKSPSKENIADLLNSYHMQTKIDQEKEFVLDEHMERINSIFSANSMEEIVQKLKQDGSPFATKQLEAINKMSPTSLKLTLRQLREGATMSLQDVFTMEYRLSQACMRGHDFYEGVRAVLIDKDQSPRWKPAALEEVSDEFVDNCFKPLGNNDLKL</sequence>
<organism>
    <name type="scientific">Gallus gallus</name>
    <name type="common">Chicken</name>
    <dbReference type="NCBI Taxonomy" id="9031"/>
    <lineage>
        <taxon>Eukaryota</taxon>
        <taxon>Metazoa</taxon>
        <taxon>Chordata</taxon>
        <taxon>Craniata</taxon>
        <taxon>Vertebrata</taxon>
        <taxon>Euteleostomi</taxon>
        <taxon>Archelosauria</taxon>
        <taxon>Archosauria</taxon>
        <taxon>Dinosauria</taxon>
        <taxon>Saurischia</taxon>
        <taxon>Theropoda</taxon>
        <taxon>Coelurosauria</taxon>
        <taxon>Aves</taxon>
        <taxon>Neognathae</taxon>
        <taxon>Galloanserae</taxon>
        <taxon>Galliformes</taxon>
        <taxon>Phasianidae</taxon>
        <taxon>Phasianinae</taxon>
        <taxon>Gallus</taxon>
    </lineage>
</organism>
<feature type="transit peptide" description="Mitochondrion" evidence="2">
    <location>
        <begin position="1"/>
        <end status="unknown"/>
    </location>
</feature>
<feature type="chain" id="PRO_0000284932" description="3-hydroxyisobutyryl-CoA hydrolase, mitochondrial">
    <location>
        <begin status="unknown"/>
        <end position="385"/>
    </location>
</feature>
<feature type="binding site" evidence="1">
    <location>
        <position position="120"/>
    </location>
    <ligand>
        <name>substrate</name>
    </ligand>
</feature>
<feature type="binding site" evidence="1">
    <location>
        <position position="145"/>
    </location>
    <ligand>
        <name>substrate</name>
    </ligand>
</feature>
<feature type="binding site" evidence="1">
    <location>
        <position position="168"/>
    </location>
    <ligand>
        <name>substrate</name>
    </ligand>
</feature>
<feature type="binding site" evidence="1">
    <location>
        <position position="176"/>
    </location>
    <ligand>
        <name>substrate</name>
    </ligand>
</feature>
<reference key="1">
    <citation type="journal article" date="2005" name="Genome Biol.">
        <title>Full-length cDNAs from chicken bursal lymphocytes to facilitate gene function analysis.</title>
        <authorList>
            <person name="Caldwell R.B."/>
            <person name="Kierzek A.M."/>
            <person name="Arakawa H."/>
            <person name="Bezzubov Y."/>
            <person name="Zaim J."/>
            <person name="Fiedler P."/>
            <person name="Kutter S."/>
            <person name="Blagodatski A."/>
            <person name="Kostovska D."/>
            <person name="Koter M."/>
            <person name="Plachy J."/>
            <person name="Carninci P."/>
            <person name="Hayashizaki Y."/>
            <person name="Buerstedde J.-M."/>
        </authorList>
    </citation>
    <scope>NUCLEOTIDE SEQUENCE [LARGE SCALE MRNA]</scope>
    <source>
        <strain>CB</strain>
        <tissue>Bursa of Fabricius</tissue>
    </source>
</reference>